<name>EF1B_THEKO</name>
<keyword id="KW-0251">Elongation factor</keyword>
<keyword id="KW-0648">Protein biosynthesis</keyword>
<keyword id="KW-1185">Reference proteome</keyword>
<organism>
    <name type="scientific">Thermococcus kodakarensis (strain ATCC BAA-918 / JCM 12380 / KOD1)</name>
    <name type="common">Pyrococcus kodakaraensis (strain KOD1)</name>
    <dbReference type="NCBI Taxonomy" id="69014"/>
    <lineage>
        <taxon>Archaea</taxon>
        <taxon>Methanobacteriati</taxon>
        <taxon>Methanobacteriota</taxon>
        <taxon>Thermococci</taxon>
        <taxon>Thermococcales</taxon>
        <taxon>Thermococcaceae</taxon>
        <taxon>Thermococcus</taxon>
    </lineage>
</organism>
<accession>Q5JFE1</accession>
<sequence length="91" mass="10281">MSDYNLVGVIKVMPTDPDVNLDELEEKLKAVIPEKYGLAKVEREPIAFGLVALKFYVLGRDEEGYSFDEVADIFRQVENVESAEVETVSRI</sequence>
<protein>
    <recommendedName>
        <fullName evidence="1">Elongation factor 1-beta</fullName>
        <shortName evidence="1">EF-1-beta</shortName>
    </recommendedName>
    <alternativeName>
        <fullName evidence="1">aEF-1beta</fullName>
    </alternativeName>
</protein>
<proteinExistence type="inferred from homology"/>
<feature type="chain" id="PRO_0000155066" description="Elongation factor 1-beta">
    <location>
        <begin position="1"/>
        <end position="91"/>
    </location>
</feature>
<comment type="function">
    <text evidence="1">Promotes the exchange of GDP for GTP in EF-1-alpha/GDP, thus allowing the regeneration of EF-1-alpha/GTP that could then be used to form the ternary complex EF-1-alpha/GTP/AAtRNA.</text>
</comment>
<comment type="similarity">
    <text evidence="1">Belongs to the EF-1-beta/EF-1-delta family.</text>
</comment>
<gene>
    <name evidence="1" type="primary">ef1b</name>
    <name type="ordered locus">TK0112</name>
</gene>
<evidence type="ECO:0000255" key="1">
    <source>
        <dbReference type="HAMAP-Rule" id="MF_00043"/>
    </source>
</evidence>
<dbReference type="EMBL" id="AP006878">
    <property type="protein sequence ID" value="BAD84301.1"/>
    <property type="molecule type" value="Genomic_DNA"/>
</dbReference>
<dbReference type="RefSeq" id="WP_011249067.1">
    <property type="nucleotide sequence ID" value="NC_006624.1"/>
</dbReference>
<dbReference type="SMR" id="Q5JFE1"/>
<dbReference type="FunCoup" id="Q5JFE1">
    <property type="interactions" value="6"/>
</dbReference>
<dbReference type="STRING" id="69014.TK0112"/>
<dbReference type="EnsemblBacteria" id="BAD84301">
    <property type="protein sequence ID" value="BAD84301"/>
    <property type="gene ID" value="TK0112"/>
</dbReference>
<dbReference type="GeneID" id="78446617"/>
<dbReference type="KEGG" id="tko:TK0112"/>
<dbReference type="PATRIC" id="fig|69014.16.peg.112"/>
<dbReference type="eggNOG" id="arCOG01988">
    <property type="taxonomic scope" value="Archaea"/>
</dbReference>
<dbReference type="HOGENOM" id="CLU_165896_1_0_2"/>
<dbReference type="InParanoid" id="Q5JFE1"/>
<dbReference type="OrthoDB" id="84643at2157"/>
<dbReference type="PhylomeDB" id="Q5JFE1"/>
<dbReference type="Proteomes" id="UP000000536">
    <property type="component" value="Chromosome"/>
</dbReference>
<dbReference type="GO" id="GO:0003746">
    <property type="term" value="F:translation elongation factor activity"/>
    <property type="evidence" value="ECO:0007669"/>
    <property type="project" value="UniProtKB-UniRule"/>
</dbReference>
<dbReference type="CDD" id="cd00292">
    <property type="entry name" value="EF1B"/>
    <property type="match status" value="1"/>
</dbReference>
<dbReference type="Gene3D" id="3.30.70.60">
    <property type="match status" value="1"/>
</dbReference>
<dbReference type="HAMAP" id="MF_00043">
    <property type="entry name" value="EF1_beta"/>
    <property type="match status" value="1"/>
</dbReference>
<dbReference type="InterPro" id="IPR036219">
    <property type="entry name" value="eEF-1beta-like_sf"/>
</dbReference>
<dbReference type="InterPro" id="IPR014038">
    <property type="entry name" value="EF1B_bsu/dsu_GNE"/>
</dbReference>
<dbReference type="InterPro" id="IPR014717">
    <property type="entry name" value="Transl_elong_EF1B/ribsomal_bS6"/>
</dbReference>
<dbReference type="InterPro" id="IPR004542">
    <property type="entry name" value="Transl_elong_EF1B_B_arc"/>
</dbReference>
<dbReference type="NCBIfam" id="TIGR00489">
    <property type="entry name" value="aEF-1_beta"/>
    <property type="match status" value="1"/>
</dbReference>
<dbReference type="NCBIfam" id="NF001670">
    <property type="entry name" value="PRK00435.1"/>
    <property type="match status" value="1"/>
</dbReference>
<dbReference type="PANTHER" id="PTHR39647">
    <property type="entry name" value="ELONGATION FACTOR 1-BETA"/>
    <property type="match status" value="1"/>
</dbReference>
<dbReference type="PANTHER" id="PTHR39647:SF1">
    <property type="entry name" value="ELONGATION FACTOR 1-BETA"/>
    <property type="match status" value="1"/>
</dbReference>
<dbReference type="Pfam" id="PF00736">
    <property type="entry name" value="EF1_GNE"/>
    <property type="match status" value="1"/>
</dbReference>
<dbReference type="PIRSF" id="PIRSF006521">
    <property type="entry name" value="Transl_elong_EF1B_B_arc"/>
    <property type="match status" value="1"/>
</dbReference>
<dbReference type="SMART" id="SM00888">
    <property type="entry name" value="EF1_GNE"/>
    <property type="match status" value="1"/>
</dbReference>
<dbReference type="SUPFAM" id="SSF54984">
    <property type="entry name" value="eEF-1beta-like"/>
    <property type="match status" value="1"/>
</dbReference>
<reference key="1">
    <citation type="journal article" date="2005" name="Genome Res.">
        <title>Complete genome sequence of the hyperthermophilic archaeon Thermococcus kodakaraensis KOD1 and comparison with Pyrococcus genomes.</title>
        <authorList>
            <person name="Fukui T."/>
            <person name="Atomi H."/>
            <person name="Kanai T."/>
            <person name="Matsumi R."/>
            <person name="Fujiwara S."/>
            <person name="Imanaka T."/>
        </authorList>
    </citation>
    <scope>NUCLEOTIDE SEQUENCE [LARGE SCALE GENOMIC DNA]</scope>
    <source>
        <strain>ATCC BAA-918 / JCM 12380 / KOD1</strain>
    </source>
</reference>